<organismHost>
    <name type="scientific">Cynopterus brachyotis</name>
    <name type="common">Lesser short-nosed fruit bat</name>
    <name type="synonym">Pachysoma brachyotis</name>
    <dbReference type="NCBI Taxonomy" id="58060"/>
</organismHost>
<organismHost>
    <name type="scientific">Eonycteris spelaea</name>
    <name type="common">Lesser dawn bat</name>
    <name type="synonym">Macroglossus spelaeus</name>
    <dbReference type="NCBI Taxonomy" id="58065"/>
</organismHost>
<organismHost>
    <name type="scientific">Homo sapiens</name>
    <name type="common">Human</name>
    <dbReference type="NCBI Taxonomy" id="9606"/>
</organismHost>
<organismHost>
    <name type="scientific">Pteropus hypomelanus</name>
    <name type="common">Island flying fox</name>
    <name type="synonym">Variable flying fox</name>
    <dbReference type="NCBI Taxonomy" id="9405"/>
</organismHost>
<organismHost>
    <name type="scientific">Pteropus vampyrus</name>
    <name type="common">Large flying fox</name>
    <dbReference type="NCBI Taxonomy" id="132908"/>
</organismHost>
<organismHost>
    <name type="scientific">Scotophilus kuhlii</name>
    <name type="common">Lesser asiatic yellow bat</name>
    <dbReference type="NCBI Taxonomy" id="153297"/>
</organismHost>
<organismHost>
    <name type="scientific">Sus scrofa</name>
    <name type="common">Pig</name>
    <dbReference type="NCBI Taxonomy" id="9823"/>
</organismHost>
<evidence type="ECO:0000250" key="1"/>
<evidence type="ECO:0000250" key="2">
    <source>
        <dbReference type="UniProtKB" id="Q9EMA9"/>
    </source>
</evidence>
<evidence type="ECO:0000256" key="3">
    <source>
        <dbReference type="SAM" id="MobiDB-lite"/>
    </source>
</evidence>
<evidence type="ECO:0000269" key="4">
    <source>
    </source>
</evidence>
<evidence type="ECO:0000269" key="5">
    <source>
    </source>
</evidence>
<evidence type="ECO:0000269" key="6">
    <source>
    </source>
</evidence>
<evidence type="ECO:0000269" key="7">
    <source>
    </source>
</evidence>
<evidence type="ECO:0000269" key="8">
    <source>
    </source>
</evidence>
<evidence type="ECO:0000269" key="9">
    <source>
    </source>
</evidence>
<evidence type="ECO:0000305" key="10"/>
<feature type="chain" id="PRO_0000236015" description="Non-structural protein V">
    <location>
        <begin position="1"/>
        <end position="456"/>
    </location>
</feature>
<feature type="region of interest" description="Disordered" evidence="3">
    <location>
        <begin position="53"/>
        <end position="92"/>
    </location>
</feature>
<feature type="region of interest" description="Disordered" evidence="3">
    <location>
        <begin position="265"/>
        <end position="324"/>
    </location>
</feature>
<feature type="compositionally biased region" description="Basic and acidic residues" evidence="3">
    <location>
        <begin position="63"/>
        <end position="76"/>
    </location>
</feature>
<feature type="binding site" evidence="1">
    <location>
        <position position="408"/>
    </location>
    <ligand>
        <name>Zn(2+)</name>
        <dbReference type="ChEBI" id="CHEBI:29105"/>
        <label>1</label>
    </ligand>
</feature>
<feature type="binding site" evidence="1">
    <location>
        <position position="427"/>
    </location>
    <ligand>
        <name>Zn(2+)</name>
        <dbReference type="ChEBI" id="CHEBI:29105"/>
        <label>1</label>
    </ligand>
</feature>
<feature type="binding site" evidence="1">
    <location>
        <position position="431"/>
    </location>
    <ligand>
        <name>Zn(2+)</name>
        <dbReference type="ChEBI" id="CHEBI:29105"/>
        <label>2</label>
    </ligand>
</feature>
<feature type="binding site" evidence="1">
    <location>
        <position position="443"/>
    </location>
    <ligand>
        <name>Zn(2+)</name>
        <dbReference type="ChEBI" id="CHEBI:29105"/>
        <label>2</label>
    </ligand>
</feature>
<feature type="binding site" evidence="1">
    <location>
        <position position="445"/>
    </location>
    <ligand>
        <name>Zn(2+)</name>
        <dbReference type="ChEBI" id="CHEBI:29105"/>
        <label>2</label>
    </ligand>
</feature>
<feature type="binding site" evidence="1">
    <location>
        <position position="448"/>
    </location>
    <ligand>
        <name>Zn(2+)</name>
        <dbReference type="ChEBI" id="CHEBI:29105"/>
        <label>2</label>
    </ligand>
</feature>
<feature type="binding site" evidence="1">
    <location>
        <position position="452"/>
    </location>
    <ligand>
        <name>Zn(2+)</name>
        <dbReference type="ChEBI" id="CHEBI:29105"/>
        <label>1</label>
    </ligand>
</feature>
<feature type="binding site" evidence="1">
    <location>
        <position position="455"/>
    </location>
    <ligand>
        <name>Zn(2+)</name>
        <dbReference type="ChEBI" id="CHEBI:29105"/>
        <label>1</label>
    </ligand>
</feature>
<feature type="modified residue" description="Phosphoserine; by host" evidence="1">
    <location>
        <position position="257"/>
    </location>
</feature>
<feature type="modified residue" description="Phosphoserine; by host" evidence="1">
    <location>
        <position position="350"/>
    </location>
</feature>
<feature type="sequence variant" description="In strain: Isolate Malaysian flying-fox.">
    <original>P</original>
    <variation>L</variation>
    <location>
        <position position="206"/>
    </location>
</feature>
<feature type="sequence variant" description="In strain: Isolate NV/MY/99/VRI-0626.">
    <original>S</original>
    <variation>R</variation>
    <location>
        <position position="274"/>
    </location>
</feature>
<feature type="sequence variant" description="In strain: Isolate NV/MY/99/VRI-0626.">
    <original>T</original>
    <variation>A</variation>
    <location>
        <position position="304"/>
    </location>
</feature>
<feature type="sequence variant" description="In strain: Isolate NV/MY/99/VRI-0626.">
    <original>E</original>
    <variation>K</variation>
    <location>
        <position position="378"/>
    </location>
</feature>
<name>V_NIPAV</name>
<keyword id="KW-1035">Host cytoplasm</keyword>
<keyword id="KW-0945">Host-virus interaction</keyword>
<keyword id="KW-1090">Inhibition of host innate immune response by virus</keyword>
<keyword id="KW-1114">Inhibition of host interferon signaling pathway by virus</keyword>
<keyword id="KW-1089">Inhibition of host MDA5 by virus</keyword>
<keyword id="KW-1113">Inhibition of host RLR pathway by virus</keyword>
<keyword id="KW-1105">Inhibition of host STAT1 by virus</keyword>
<keyword id="KW-1106">Inhibition of host STAT2 by virus</keyword>
<keyword id="KW-0922">Interferon antiviral system evasion</keyword>
<keyword id="KW-0479">Metal-binding</keyword>
<keyword id="KW-0597">Phosphoprotein</keyword>
<keyword id="KW-0691">RNA editing</keyword>
<keyword id="KW-0899">Viral immunoevasion</keyword>
<keyword id="KW-0862">Zinc</keyword>
<proteinExistence type="evidence at protein level"/>
<protein>
    <recommendedName>
        <fullName>Non-structural protein V</fullName>
    </recommendedName>
</protein>
<sequence length="456" mass="50325">MDKLELVNDGLNIIDFIQKNQKEIQKTYGRSSIQQPSIKDQTKAWEDFLQCTSGESEQVEGGMSKDDGDVERRNLEDLSSTSPTDGTIGKRVSNTRDWAEGSDDIQLDPVVTDVVYHDHGGECTGYGFTSSPERGWSDYTSGANNGNVCLVSDAKMLSYAPEIAVSKEDRETDLVHLENKLSTTGLNPTAVPFTLRNLSDPAKDSPVIAEHYYGLGVKEQNVGPQTSRNVNLDSIKLYTSDDEEADQLEFEDEFAGSSSEVIVGISPEDEEPSSVGGKPNESIGRTIEGQSIRDNLQAKDNKSTDVPGAGPKDSAVKEEPPQKRLPMLAEEFECSGSEDPIIRELLKENSLINCQQGKDAQPPYHWSIERSISPDKTEIVNGAVQTADRQRPGTPMPKSRGIPIKKGHRREISICWDGKRAWVEEWCNPACSRITPLPRRQECQCGECPTECFHCG</sequence>
<reference key="1">
    <citation type="journal article" date="2000" name="Science">
        <title>Nipah virus: a recently emergent deadly paramyxovirus.</title>
        <authorList>
            <person name="Chua K.B."/>
            <person name="Bellini W.J."/>
            <person name="Rota P.A."/>
            <person name="Harcourt B.H."/>
            <person name="Tamin A."/>
            <person name="Lam S.K."/>
            <person name="Ksiazek T.G."/>
            <person name="Rollin P.E."/>
            <person name="Zaki S.R."/>
            <person name="Shieh W."/>
            <person name="Goldsmith C.S."/>
            <person name="Gubler D.J."/>
            <person name="Roehrig J.T."/>
            <person name="Eaton B."/>
            <person name="Gould A.R."/>
            <person name="Olson J."/>
            <person name="Field H."/>
            <person name="Daniels P."/>
            <person name="Ling A.E."/>
            <person name="Peters C.J."/>
            <person name="Anderson L.J."/>
            <person name="Mahy B.W."/>
        </authorList>
    </citation>
    <scope>NUCLEOTIDE SEQUENCE [GENOMIC RNA]</scope>
</reference>
<reference key="2">
    <citation type="journal article" date="2001" name="Virology">
        <title>Molecular characterization of the polymerase gene and genomic termini of Nipah virus.</title>
        <authorList>
            <person name="Harcourt B.H."/>
            <person name="Tamin A."/>
            <person name="Halpin K."/>
            <person name="Ksiazek T.G."/>
            <person name="Rollin P.E."/>
            <person name="Bellini W.J."/>
            <person name="Rota P.A."/>
        </authorList>
    </citation>
    <scope>NUCLEOTIDE SEQUENCE [GENOMIC RNA]</scope>
</reference>
<reference key="3">
    <citation type="journal article" date="2001" name="J. Gen. Virol.">
        <title>Complete nucleotide sequences of Nipah virus isolates from Malaysia.</title>
        <authorList>
            <person name="Chan Y.P."/>
            <person name="Chua K.B."/>
            <person name="Koh C.L."/>
            <person name="Lim M.E."/>
            <person name="Lam S.K."/>
        </authorList>
    </citation>
    <scope>NUCLEOTIDE SEQUENCE [GENOMIC RNA]</scope>
    <source>
        <strain>Isolate UMMC1</strain>
        <strain>Isolate UMMC2</strain>
    </source>
</reference>
<reference key="4">
    <citation type="journal article" date="2002" name="Microbes Infect.">
        <title>Isolation of Nipah virus from Malaysian island flying-foxes.</title>
        <authorList>
            <person name="Chua K.B."/>
            <person name="Koh C.L."/>
            <person name="Hooi P.S."/>
            <person name="Wee K.F."/>
            <person name="Khong J.H."/>
            <person name="Chua B.H."/>
            <person name="Chan Y.P."/>
            <person name="Lim M.E."/>
            <person name="Lam S.K."/>
        </authorList>
    </citation>
    <scope>NUCLEOTIDE SEQUENCE [GENOMIC RNA]</scope>
    <source>
        <strain>Isolate Malaysian flying-fox</strain>
    </source>
</reference>
<reference key="5">
    <citation type="journal article" date="2004" name="Emerg. Infect. Dis.">
        <title>Isolation and molecular identification of Nipah virus from pigs.</title>
        <authorList>
            <person name="Abubakar S."/>
            <person name="Chang L.Y."/>
            <person name="Mohdali A.R."/>
            <person name="Sharifah S.H."/>
            <person name="Yusoff K."/>
            <person name="Zamrod Z."/>
        </authorList>
    </citation>
    <scope>NUCLEOTIDE SEQUENCE [GENOMIC RNA]</scope>
    <source>
        <strain>Isolate NV/MY/99/UM-0128</strain>
        <strain>Isolate NV/MY/99/VRI-1413</strain>
        <strain>Isolate NV/MY/99/VRI-2794</strain>
    </source>
</reference>
<reference key="6">
    <citation type="submission" date="2005-01" db="EMBL/GenBank/DDBJ databases">
        <title>Identification of a new Nipah virus strain from pigs.</title>
        <authorList>
            <person name="Abubakar S."/>
            <person name="Li-Yen C."/>
            <person name="Mohdali A.R."/>
            <person name="Sharifah S.H."/>
        </authorList>
    </citation>
    <scope>NUCLEOTIDE SEQUENCE [GENOMIC RNA]</scope>
    <source>
        <strain>Isolate NV/MY/99/VRI-0626</strain>
    </source>
</reference>
<reference key="7">
    <citation type="journal article" date="2002" name="J. Virol.">
        <title>Nipah virus V protein evades alpha and gamma interferons by preventing STAT1 and STAT2 activation and nuclear accumulation.</title>
        <authorList>
            <person name="Rodriguez J.J."/>
            <person name="Parisien J.P."/>
            <person name="Horvath C.M."/>
        </authorList>
    </citation>
    <scope>FUNCTION</scope>
    <scope>INTERACTION WITH HOST STAT1 AND STAT2</scope>
</reference>
<reference key="8">
    <citation type="journal article" date="2004" name="J. Virol.">
        <title>Nipah virus V and W proteins have a common STAT1-binding domain yet inhibit STAT1 activation from the cytoplasmic and nuclear compartments, respectively.</title>
        <authorList>
            <person name="Shaw M.L."/>
            <person name="Garcia-Sastre A."/>
            <person name="Palese P."/>
            <person name="Basler C.F."/>
        </authorList>
    </citation>
    <scope>INTERACTION WITH HOST STAT1</scope>
</reference>
<reference key="9">
    <citation type="journal article" date="2009" name="J. Gen. Virol.">
        <title>Determination of the henipavirus phosphoprotein gene mRNA editing frequencies and detection of the C, V and W proteins of Nipah virus in virus-infected cells.</title>
        <authorList>
            <person name="Lo M.K."/>
            <person name="Harcourt B.H."/>
            <person name="Mungall B.A."/>
            <person name="Tamin A."/>
            <person name="Peeples M.E."/>
            <person name="Bellini W.J."/>
            <person name="Rota P.A."/>
        </authorList>
    </citation>
    <scope>SUBCELLULAR LOCATION</scope>
</reference>
<reference key="10">
    <citation type="journal article" date="2009" name="J. Virol.">
        <title>A shared interface mediates paramyxovirus interference with antiviral RNA helicases MDA5 and LGP2.</title>
        <authorList>
            <person name="Parisien J.P."/>
            <person name="Bamming D."/>
            <person name="Komuro A."/>
            <person name="Ramachandran A."/>
            <person name="Rodriguez J.J."/>
            <person name="Barber G."/>
            <person name="Wojahn R.D."/>
            <person name="Horvath C.M."/>
        </authorList>
    </citation>
    <scope>FUNCTION</scope>
    <scope>INTERACTION WITH HOST IFIH1 AND DHX58</scope>
</reference>
<reference key="11">
    <citation type="journal article" date="2018" name="Sci. Rep.">
        <title>Possible role of the Nipah virus V protein in the regulation of the interferon beta induction by interacting with UBX domain-containing protein1.</title>
        <authorList>
            <person name="Uchida S."/>
            <person name="Horie R."/>
            <person name="Sato H."/>
            <person name="Kai C."/>
            <person name="Yoneda M."/>
        </authorList>
    </citation>
    <scope>FUNCTION</scope>
    <scope>SUBCELLULAR LOCATION</scope>
    <scope>INTERACTION WITH HOST UBXN1</scope>
</reference>
<reference key="12">
    <citation type="journal article" date="2018" name="J. Virol.">
        <title>Paramyxovirus V Proteins Interact with the RIG-I/TRIM25 Regulatory Complex and Inhibit RIG-I Signaling.</title>
        <authorList>
            <person name="Sanchez-Aparicio M.T."/>
            <person name="Feinman L.J."/>
            <person name="Garcia-Sastre A."/>
            <person name="Shaw M.L."/>
        </authorList>
    </citation>
    <scope>FUNCTION</scope>
    <scope>INTERACTION WITH HOST TRIM25</scope>
    <scope>INTERACTION WITH HOST RIGI</scope>
</reference>
<gene>
    <name type="primary">P/V/C</name>
</gene>
<comment type="function">
    <text evidence="2 4 7 9">Plays an essential role in the inhibition of host immune response. Prevents the establishment of cellular antiviral state by blocking interferon-alpha/beta (IFN-alpha/beta) production and signaling pathway. Interacts with host IFIH1/MDA5 and DHX58/LGP2 to inhibit the transduction pathway involved in the activation of IFN-beta promoter, thus protecting the virus against cell antiviral state. Blocks the type I interferon signaling pathway by interacting with host STAT1 and STAT2 and thereby inhibiting their phosphorylation and subsequent nuclear translocation. Efficiently blocks the type II interferon signaling pathway. Suppresses interferon induction by interacting with and stabilizing host UBXN1, a negative regulator of both RIG-I-like receptors (RLR) and NF-kappa-B pathways. Blocks the type I interferon signaling pathway by disrupting the RIG-I signaling pathway (By similarity).</text>
</comment>
<comment type="subunit">
    <text evidence="4 5 7 8 9">Interacts with host IFIH1/MDA5, DHX58/LGP2, STAT1 and STAT2. Interacts (via N-terminus) with host UBXN1 (via C-terminal UBX domain); this interaction inhibits interferon-alpha/beta (IFN-alpha/beta) production (PubMed:29769705). Interacts with host RIGI regulatory protein (via CARDs domain) and host TRIM25 (via SPRY domain); these interactions prevent TRIM25-mediated ubiquitination of RIG-I and disrupts downstream RIG-I signaling (PubMed:29321315).</text>
</comment>
<comment type="subcellular location">
    <subcellularLocation>
        <location evidence="6 9">Host cytoplasm</location>
    </subcellularLocation>
</comment>
<comment type="RNA editing">
    <location>
        <position position="406"/>
    </location>
    <text>Partially edited. RNA editing at this position consists of an insertion of one or two guanine nucleotides. The sequence displayed here is the V protein, derived from the +1G edited RNA. The unedited RNA gives rise to the P protein (AC Q9IK91), the +2G edited RNA gives rise to the W protein (AC P0C1C7).</text>
</comment>
<comment type="miscellaneous">
    <text>The P/V/C gene has two overlapping open reading frames. One encodes the P/V/W proteins and the other the C protein.</text>
</comment>
<comment type="similarity">
    <text evidence="10">Belongs to the paramyxoviruses V protein family.</text>
</comment>
<organism>
    <name type="scientific">Nipah virus</name>
    <dbReference type="NCBI Taxonomy" id="3052225"/>
    <lineage>
        <taxon>Viruses</taxon>
        <taxon>Riboviria</taxon>
        <taxon>Orthornavirae</taxon>
        <taxon>Negarnaviricota</taxon>
        <taxon>Haploviricotina</taxon>
        <taxon>Monjiviricetes</taxon>
        <taxon>Mononegavirales</taxon>
        <taxon>Paramyxoviridae</taxon>
        <taxon>Orthoparamyxovirinae</taxon>
        <taxon>Henipavirus</taxon>
    </lineage>
</organism>
<accession>Q997F2</accession>
<accession>Q8QU01</accession>
<dbReference type="EMBL" id="AF212302">
    <property type="protein sequence ID" value="AAK29090.1"/>
    <property type="molecule type" value="Genomic_RNA"/>
</dbReference>
<dbReference type="EMBL" id="AY029768">
    <property type="protein sequence ID" value="AAK50551.1"/>
    <property type="molecule type" value="Genomic_RNA"/>
</dbReference>
<dbReference type="EMBL" id="AY029767">
    <property type="protein sequence ID" value="AAK50547.1"/>
    <property type="molecule type" value="Genomic_RNA"/>
</dbReference>
<dbReference type="EMBL" id="AF376747">
    <property type="protein sequence ID" value="AAM13407.1"/>
    <property type="molecule type" value="Genomic_RNA"/>
</dbReference>
<dbReference type="EMBL" id="AJ564621">
    <property type="status" value="NOT_ANNOTATED_CDS"/>
    <property type="molecule type" value="Genomic_RNA"/>
</dbReference>
<dbReference type="EMBL" id="AJ564622">
    <property type="status" value="NOT_ANNOTATED_CDS"/>
    <property type="molecule type" value="Genomic_RNA"/>
</dbReference>
<dbReference type="EMBL" id="AJ564623">
    <property type="status" value="NOT_ANNOTATED_CDS"/>
    <property type="molecule type" value="Genomic_RNA"/>
</dbReference>
<dbReference type="EMBL" id="AJ627196">
    <property type="status" value="NOT_ANNOTATED_CDS"/>
    <property type="molecule type" value="Genomic_RNA"/>
</dbReference>
<dbReference type="RefSeq" id="NP_112023.1">
    <property type="nucleotide sequence ID" value="NC_002728.1"/>
</dbReference>
<dbReference type="SASBDB" id="Q997F2"/>
<dbReference type="SMR" id="Q997F2"/>
<dbReference type="IntAct" id="Q997F2">
    <property type="interactions" value="44"/>
</dbReference>
<dbReference type="MINT" id="Q997F2"/>
<dbReference type="OrthoDB" id="20684at10239"/>
<dbReference type="Proteomes" id="UP000002330">
    <property type="component" value="Segment"/>
</dbReference>
<dbReference type="Proteomes" id="UP000007527">
    <property type="component" value="Segment"/>
</dbReference>
<dbReference type="Proteomes" id="UP000008676">
    <property type="component" value="Segment"/>
</dbReference>
<dbReference type="Proteomes" id="UP000100567">
    <property type="component" value="Segment"/>
</dbReference>
<dbReference type="Proteomes" id="UP000110983">
    <property type="component" value="Segment"/>
</dbReference>
<dbReference type="Proteomes" id="UP000130871">
    <property type="component" value="Segment"/>
</dbReference>
<dbReference type="Proteomes" id="UP000170143">
    <property type="component" value="Segment"/>
</dbReference>
<dbReference type="GO" id="GO:0030430">
    <property type="term" value="C:host cell cytoplasm"/>
    <property type="evidence" value="ECO:0000314"/>
    <property type="project" value="UniProtKB"/>
</dbReference>
<dbReference type="GO" id="GO:0046872">
    <property type="term" value="F:metal ion binding"/>
    <property type="evidence" value="ECO:0007669"/>
    <property type="project" value="UniProtKB-KW"/>
</dbReference>
<dbReference type="GO" id="GO:0050821">
    <property type="term" value="P:protein stabilization"/>
    <property type="evidence" value="ECO:0000315"/>
    <property type="project" value="DisProt"/>
</dbReference>
<dbReference type="GO" id="GO:0039554">
    <property type="term" value="P:symbiont-mediated suppression of host cytoplasmic pattern recognition receptor signaling pathway via inhibition of MDA-5 activity"/>
    <property type="evidence" value="ECO:0007669"/>
    <property type="project" value="UniProtKB-KW"/>
</dbReference>
<dbReference type="GO" id="GO:0039563">
    <property type="term" value="P:symbiont-mediated suppression of host JAK-STAT cascade via inhibition of STAT1 activity"/>
    <property type="evidence" value="ECO:0007669"/>
    <property type="project" value="UniProtKB-KW"/>
</dbReference>
<dbReference type="GO" id="GO:0039564">
    <property type="term" value="P:symbiont-mediated suppression of host JAK-STAT cascade via inhibition of STAT2 activity"/>
    <property type="evidence" value="ECO:0007669"/>
    <property type="project" value="UniProtKB-KW"/>
</dbReference>
<dbReference type="GO" id="GO:0075111">
    <property type="term" value="P:symbiont-mediated suppression of host receptor-mediated signal transduction"/>
    <property type="evidence" value="ECO:0000270"/>
    <property type="project" value="DisProt"/>
</dbReference>
<dbReference type="GO" id="GO:0039502">
    <property type="term" value="P:symbiont-mediated suppression of host type I interferon-mediated signaling pathway"/>
    <property type="evidence" value="ECO:0000314"/>
    <property type="project" value="UniProtKB"/>
</dbReference>
<dbReference type="DisProt" id="DP03000"/>
<dbReference type="Gene3D" id="4.10.80.340">
    <property type="match status" value="1"/>
</dbReference>
<dbReference type="Gene3D" id="6.10.250.2490">
    <property type="match status" value="1"/>
</dbReference>
<dbReference type="InterPro" id="IPR024279">
    <property type="entry name" value="Paramyx_V_Zn-bd"/>
</dbReference>
<dbReference type="InterPro" id="IPR035430">
    <property type="entry name" value="Paramyxo_PNT"/>
</dbReference>
<dbReference type="InterPro" id="IPR025909">
    <property type="entry name" value="Soyouz_module"/>
</dbReference>
<dbReference type="Pfam" id="PF14320">
    <property type="entry name" value="Paramyxo_PNT"/>
    <property type="match status" value="1"/>
</dbReference>
<dbReference type="Pfam" id="PF14313">
    <property type="entry name" value="Soyouz_module"/>
    <property type="match status" value="1"/>
</dbReference>
<dbReference type="Pfam" id="PF13008">
    <property type="entry name" value="zf-Paramyx-P"/>
    <property type="match status" value="1"/>
</dbReference>